<dbReference type="EMBL" id="X52107">
    <property type="protein sequence ID" value="CAA36331.1"/>
    <property type="molecule type" value="Genomic_DNA"/>
</dbReference>
<dbReference type="PIR" id="A04229">
    <property type="entry name" value="VCBPPF"/>
</dbReference>
<dbReference type="PIR" id="S15143">
    <property type="entry name" value="S15143"/>
</dbReference>
<dbReference type="PDB" id="1IFM">
    <property type="method" value="Fiber"/>
    <property type="resolution" value="3.30 A"/>
    <property type="chains" value="A=37-82"/>
</dbReference>
<dbReference type="PDB" id="1IFN">
    <property type="method" value="Fiber"/>
    <property type="resolution" value="4.00 A"/>
    <property type="chains" value="A=37-82"/>
</dbReference>
<dbReference type="PDB" id="1PFI">
    <property type="method" value="Fiber"/>
    <property type="resolution" value="3.00 A"/>
    <property type="chains" value="A/B=37-82"/>
</dbReference>
<dbReference type="PDB" id="1PJF">
    <property type="method" value="NMR"/>
    <property type="chains" value="A=37-82"/>
</dbReference>
<dbReference type="PDB" id="1QL1">
    <property type="method" value="Fiber"/>
    <property type="resolution" value="3.10 A"/>
    <property type="chains" value="A=37-82"/>
</dbReference>
<dbReference type="PDB" id="1QL2">
    <property type="method" value="Fiber"/>
    <property type="resolution" value="3.10 A"/>
    <property type="chains" value="A/B/C=37-82"/>
</dbReference>
<dbReference type="PDB" id="1ZN5">
    <property type="method" value="NMR"/>
    <property type="chains" value="A=37-82"/>
</dbReference>
<dbReference type="PDB" id="2IFM">
    <property type="method" value="Fiber"/>
    <property type="resolution" value="3.30 A"/>
    <property type="chains" value="A=37-82"/>
</dbReference>
<dbReference type="PDB" id="2IFN">
    <property type="method" value="Fiber"/>
    <property type="resolution" value="4.00 A"/>
    <property type="chains" value="A=37-82"/>
</dbReference>
<dbReference type="PDB" id="2KLV">
    <property type="method" value="NMR"/>
    <property type="chains" value="A=37-82"/>
</dbReference>
<dbReference type="PDB" id="2KSJ">
    <property type="method" value="Other"/>
    <property type="chains" value="A=37-82"/>
</dbReference>
<dbReference type="PDB" id="2XKM">
    <property type="method" value="Other"/>
    <property type="resolution" value="3.30 A"/>
    <property type="chains" value="A=37-82"/>
</dbReference>
<dbReference type="PDB" id="3IFM">
    <property type="method" value="Fiber"/>
    <property type="resolution" value="3.30 A"/>
    <property type="chains" value="A=37-82"/>
</dbReference>
<dbReference type="PDB" id="4IFM">
    <property type="method" value="Fiber"/>
    <property type="resolution" value="3.30 A"/>
    <property type="chains" value="A=37-82"/>
</dbReference>
<dbReference type="PDB" id="6TUP">
    <property type="method" value="EM"/>
    <property type="resolution" value="3.20 A"/>
    <property type="chains" value="A=37-82"/>
</dbReference>
<dbReference type="PDB" id="6TUQ">
    <property type="method" value="EM"/>
    <property type="resolution" value="3.90 A"/>
    <property type="chains" value="A=37-82"/>
</dbReference>
<dbReference type="PDBsum" id="1IFM"/>
<dbReference type="PDBsum" id="1IFN"/>
<dbReference type="PDBsum" id="1PFI"/>
<dbReference type="PDBsum" id="1PJF"/>
<dbReference type="PDBsum" id="1QL1"/>
<dbReference type="PDBsum" id="1QL2"/>
<dbReference type="PDBsum" id="1ZN5"/>
<dbReference type="PDBsum" id="2IFM"/>
<dbReference type="PDBsum" id="2IFN"/>
<dbReference type="PDBsum" id="2KLV"/>
<dbReference type="PDBsum" id="2KSJ"/>
<dbReference type="PDBsum" id="2XKM"/>
<dbReference type="PDBsum" id="3IFM"/>
<dbReference type="PDBsum" id="4IFM"/>
<dbReference type="PDBsum" id="6TUP"/>
<dbReference type="PDBsum" id="6TUQ"/>
<dbReference type="BMRB" id="P03621"/>
<dbReference type="SMR" id="P03621"/>
<dbReference type="KEGG" id="vg:1260711"/>
<dbReference type="EvolutionaryTrace" id="P03621"/>
<dbReference type="Proteomes" id="UP000002121">
    <property type="component" value="Genome"/>
</dbReference>
<dbReference type="GO" id="GO:0019029">
    <property type="term" value="C:helical viral capsid"/>
    <property type="evidence" value="ECO:0007669"/>
    <property type="project" value="UniProtKB-KW"/>
</dbReference>
<dbReference type="GO" id="GO:0033644">
    <property type="term" value="C:host cell membrane"/>
    <property type="evidence" value="ECO:0007669"/>
    <property type="project" value="UniProtKB-SubCell"/>
</dbReference>
<dbReference type="GO" id="GO:0016020">
    <property type="term" value="C:membrane"/>
    <property type="evidence" value="ECO:0007669"/>
    <property type="project" value="UniProtKB-KW"/>
</dbReference>
<dbReference type="Gene3D" id="1.20.5.230">
    <property type="match status" value="1"/>
</dbReference>
<dbReference type="InterPro" id="IPR008020">
    <property type="entry name" value="G8P"/>
</dbReference>
<dbReference type="Pfam" id="PF05356">
    <property type="entry name" value="Phage_Coat_B"/>
    <property type="match status" value="1"/>
</dbReference>
<dbReference type="SUPFAM" id="SSF57987">
    <property type="entry name" value="Inovirus (filamentous phage) major coat protein"/>
    <property type="match status" value="1"/>
</dbReference>
<organism>
    <name type="scientific">Pseudomonas phage Pf1</name>
    <name type="common">Bacteriophage Pf1</name>
    <dbReference type="NCBI Taxonomy" id="2011081"/>
    <lineage>
        <taxon>Viruses</taxon>
        <taxon>Monodnaviria</taxon>
        <taxon>Loebvirae</taxon>
        <taxon>Hofneiviricota</taxon>
        <taxon>Faserviricetes</taxon>
        <taxon>Tubulavirales</taxon>
        <taxon>Inoviridae</taxon>
        <taxon>Primolicivirus</taxon>
    </lineage>
</organism>
<name>CAPSD_BPPF1</name>
<proteinExistence type="evidence at protein level"/>
<reference key="1">
    <citation type="journal article" date="1991" name="J. Mol. Biol.">
        <title>DNA sequence of the filamentous bacteriophage Pf1.</title>
        <authorList>
            <person name="Hill D.F."/>
            <person name="Short N.J."/>
            <person name="Perham R.N."/>
            <person name="Petersen G.B."/>
        </authorList>
    </citation>
    <scope>NUCLEOTIDE SEQUENCE [GENOMIC DNA]</scope>
    <source>
        <strain>ATCC 25102-B1 / pf</strain>
    </source>
</reference>
<reference key="2">
    <citation type="journal article" date="1975" name="Nature">
        <title>Primary structure and sidechain interactions of Pf1 filamentous bacterial virus coat protein.</title>
        <authorList>
            <person name="Nakashima Y."/>
            <person name="Wiseman R.L."/>
            <person name="Konigsberg W."/>
            <person name="Marvin D.A."/>
        </authorList>
    </citation>
    <scope>PROTEIN SEQUENCE OF 37-82</scope>
</reference>
<reference key="3">
    <citation type="journal article" date="1994" name="Science">
        <title>Pf1 virus structure: helical coat protein and DNA with paraxial phosphates.</title>
        <authorList>
            <person name="Liu D.J."/>
            <person name="Day L.A."/>
        </authorList>
    </citation>
    <scope>X-RAY CRYSTALLOGRAPHY (3.0 ANGSTROMS)</scope>
</reference>
<reference key="4">
    <citation type="journal article" date="1991" name="Science">
        <title>Membrane-mediated assembly of filamentous bacteriophage Pf1 coat protein.</title>
        <authorList>
            <person name="Nambudripad R."/>
            <person name="Stark W."/>
            <person name="Opella S.J."/>
            <person name="Makowski L."/>
        </authorList>
    </citation>
    <scope>STRUCTURE BY NMR</scope>
</reference>
<protein>
    <recommendedName>
        <fullName>Capsid protein G8P</fullName>
    </recommendedName>
    <alternativeName>
        <fullName>Coat protein B</fullName>
    </alternativeName>
    <alternativeName>
        <fullName>Gene 8 protein</fullName>
        <shortName>G8P</shortName>
    </alternativeName>
    <alternativeName>
        <fullName>Major coat protein</fullName>
    </alternativeName>
</protein>
<feature type="signal peptide">
    <location>
        <begin position="1"/>
        <end position="28"/>
    </location>
</feature>
<feature type="chain" id="PRO_0000003302" description="Capsid protein G8P">
    <location>
        <begin position="29"/>
        <end position="82"/>
    </location>
</feature>
<feature type="topological domain" description="Periplasmic" evidence="2">
    <location>
        <begin position="29"/>
        <end position="57"/>
    </location>
</feature>
<feature type="transmembrane region" description="Helical">
    <location>
        <begin position="58"/>
        <end position="78"/>
    </location>
</feature>
<feature type="topological domain" description="Cytoplasmic" evidence="2">
    <location>
        <begin position="79"/>
        <end position="82"/>
    </location>
</feature>
<feature type="sequence conflict" description="In Ref. 2; AA sequence." evidence="3" ref="2">
    <original>E</original>
    <variation>Q</variation>
    <location>
        <position position="45"/>
    </location>
</feature>
<feature type="helix" evidence="4">
    <location>
        <begin position="39"/>
        <end position="51"/>
    </location>
</feature>
<feature type="helix" evidence="4">
    <location>
        <begin position="53"/>
        <end position="81"/>
    </location>
</feature>
<keyword id="KW-0002">3D-structure</keyword>
<keyword id="KW-0167">Capsid protein</keyword>
<keyword id="KW-0903">Direct protein sequencing</keyword>
<keyword id="KW-1139">Helical capsid protein</keyword>
<keyword id="KW-1043">Host membrane</keyword>
<keyword id="KW-0472">Membrane</keyword>
<keyword id="KW-1185">Reference proteome</keyword>
<keyword id="KW-0732">Signal</keyword>
<keyword id="KW-0812">Transmembrane</keyword>
<keyword id="KW-1133">Transmembrane helix</keyword>
<keyword id="KW-0946">Virion</keyword>
<evidence type="ECO:0000250" key="1"/>
<evidence type="ECO:0000255" key="2"/>
<evidence type="ECO:0000305" key="3"/>
<evidence type="ECO:0007829" key="4">
    <source>
        <dbReference type="PDB" id="1PFI"/>
    </source>
</evidence>
<comment type="function">
    <text evidence="1">Self assembles to form a helical capsid wrapping up the viral genomic DNA. The capsid displays a filamentous structure with a length of 760-1950 nm and a width of 6-8 nm. The virion assembly and budding take place at the host inner membrane (By similarity).</text>
</comment>
<comment type="subunit">
    <text evidence="1">Homomultimerizes. There are several thousands of this protein in the phage capsid (By similarity).</text>
</comment>
<comment type="subcellular location">
    <subcellularLocation>
        <location evidence="3">Virion</location>
    </subcellularLocation>
    <subcellularLocation>
        <location>Host membrane</location>
        <topology>Single-pass type I membrane protein</topology>
    </subcellularLocation>
    <text evidence="1">prior to assembly, the major capsid protein is found associated with the bacterial host inner membrane.</text>
</comment>
<comment type="similarity">
    <text evidence="3">Belongs to the inovirus capsid protein family.</text>
</comment>
<gene>
    <name type="primary">VIII</name>
</gene>
<sequence>MKAMKQRIAKFSPVASFRNLCIAGSVTAATSLPAFAGVIDTSAVESAITDGQGDMKAIGGYIVGALVILAVAGLIYSMLRKA</sequence>
<organismHost>
    <name type="scientific">Pseudomonas aeruginosa</name>
    <dbReference type="NCBI Taxonomy" id="287"/>
</organismHost>
<accession>P03621</accession>